<accession>A8MLE5</accession>
<reference key="1">
    <citation type="submission" date="2007-10" db="EMBL/GenBank/DDBJ databases">
        <title>Complete genome of Alkaliphilus oremlandii OhILAs.</title>
        <authorList>
            <person name="Copeland A."/>
            <person name="Lucas S."/>
            <person name="Lapidus A."/>
            <person name="Barry K."/>
            <person name="Detter J.C."/>
            <person name="Glavina del Rio T."/>
            <person name="Hammon N."/>
            <person name="Israni S."/>
            <person name="Dalin E."/>
            <person name="Tice H."/>
            <person name="Pitluck S."/>
            <person name="Chain P."/>
            <person name="Malfatti S."/>
            <person name="Shin M."/>
            <person name="Vergez L."/>
            <person name="Schmutz J."/>
            <person name="Larimer F."/>
            <person name="Land M."/>
            <person name="Hauser L."/>
            <person name="Kyrpides N."/>
            <person name="Mikhailova N."/>
            <person name="Stolz J.F."/>
            <person name="Dawson A."/>
            <person name="Fisher E."/>
            <person name="Crable B."/>
            <person name="Perera E."/>
            <person name="Lisak J."/>
            <person name="Ranganathan M."/>
            <person name="Basu P."/>
            <person name="Richardson P."/>
        </authorList>
    </citation>
    <scope>NUCLEOTIDE SEQUENCE [LARGE SCALE GENOMIC DNA]</scope>
    <source>
        <strain>OhILAs</strain>
    </source>
</reference>
<gene>
    <name evidence="1" type="primary">rplV</name>
    <name type="ordered locus">Clos_0497</name>
</gene>
<protein>
    <recommendedName>
        <fullName evidence="1">Large ribosomal subunit protein uL22</fullName>
    </recommendedName>
    <alternativeName>
        <fullName evidence="2">50S ribosomal protein L22</fullName>
    </alternativeName>
</protein>
<evidence type="ECO:0000255" key="1">
    <source>
        <dbReference type="HAMAP-Rule" id="MF_01331"/>
    </source>
</evidence>
<evidence type="ECO:0000305" key="2"/>
<feature type="chain" id="PRO_1000067603" description="Large ribosomal subunit protein uL22">
    <location>
        <begin position="1"/>
        <end position="110"/>
    </location>
</feature>
<comment type="function">
    <text evidence="1">This protein binds specifically to 23S rRNA; its binding is stimulated by other ribosomal proteins, e.g. L4, L17, and L20. It is important during the early stages of 50S assembly. It makes multiple contacts with different domains of the 23S rRNA in the assembled 50S subunit and ribosome (By similarity).</text>
</comment>
<comment type="function">
    <text evidence="1">The globular domain of the protein is located near the polypeptide exit tunnel on the outside of the subunit, while an extended beta-hairpin is found that lines the wall of the exit tunnel in the center of the 70S ribosome.</text>
</comment>
<comment type="subunit">
    <text evidence="1">Part of the 50S ribosomal subunit.</text>
</comment>
<comment type="similarity">
    <text evidence="1">Belongs to the universal ribosomal protein uL22 family.</text>
</comment>
<sequence>MEAKAIVRYVRIAPRKAQQVVDLVRGKKVDEALAILKYTPKAAAPIVEKLVKSAVANAENNNGMDIDRLYISEIYANQGPTMKRFRPRAMGRATTIRKRTSHIEVVLKEK</sequence>
<dbReference type="EMBL" id="CP000853">
    <property type="protein sequence ID" value="ABW18059.1"/>
    <property type="molecule type" value="Genomic_DNA"/>
</dbReference>
<dbReference type="RefSeq" id="WP_012158373.1">
    <property type="nucleotide sequence ID" value="NC_009922.1"/>
</dbReference>
<dbReference type="SMR" id="A8MLE5"/>
<dbReference type="STRING" id="350688.Clos_0497"/>
<dbReference type="KEGG" id="aoe:Clos_0497"/>
<dbReference type="eggNOG" id="COG0091">
    <property type="taxonomic scope" value="Bacteria"/>
</dbReference>
<dbReference type="HOGENOM" id="CLU_083987_3_3_9"/>
<dbReference type="OrthoDB" id="9805969at2"/>
<dbReference type="Proteomes" id="UP000000269">
    <property type="component" value="Chromosome"/>
</dbReference>
<dbReference type="GO" id="GO:0022625">
    <property type="term" value="C:cytosolic large ribosomal subunit"/>
    <property type="evidence" value="ECO:0007669"/>
    <property type="project" value="TreeGrafter"/>
</dbReference>
<dbReference type="GO" id="GO:0019843">
    <property type="term" value="F:rRNA binding"/>
    <property type="evidence" value="ECO:0007669"/>
    <property type="project" value="UniProtKB-UniRule"/>
</dbReference>
<dbReference type="GO" id="GO:0003735">
    <property type="term" value="F:structural constituent of ribosome"/>
    <property type="evidence" value="ECO:0007669"/>
    <property type="project" value="InterPro"/>
</dbReference>
<dbReference type="GO" id="GO:0006412">
    <property type="term" value="P:translation"/>
    <property type="evidence" value="ECO:0007669"/>
    <property type="project" value="UniProtKB-UniRule"/>
</dbReference>
<dbReference type="CDD" id="cd00336">
    <property type="entry name" value="Ribosomal_L22"/>
    <property type="match status" value="1"/>
</dbReference>
<dbReference type="FunFam" id="3.90.470.10:FF:000011">
    <property type="entry name" value="50S ribosomal protein L22"/>
    <property type="match status" value="1"/>
</dbReference>
<dbReference type="Gene3D" id="3.90.470.10">
    <property type="entry name" value="Ribosomal protein L22/L17"/>
    <property type="match status" value="1"/>
</dbReference>
<dbReference type="HAMAP" id="MF_01331_B">
    <property type="entry name" value="Ribosomal_uL22_B"/>
    <property type="match status" value="1"/>
</dbReference>
<dbReference type="InterPro" id="IPR001063">
    <property type="entry name" value="Ribosomal_uL22"/>
</dbReference>
<dbReference type="InterPro" id="IPR005727">
    <property type="entry name" value="Ribosomal_uL22_bac/chlpt-type"/>
</dbReference>
<dbReference type="InterPro" id="IPR047867">
    <property type="entry name" value="Ribosomal_uL22_bac/org-type"/>
</dbReference>
<dbReference type="InterPro" id="IPR018260">
    <property type="entry name" value="Ribosomal_uL22_CS"/>
</dbReference>
<dbReference type="InterPro" id="IPR036394">
    <property type="entry name" value="Ribosomal_uL22_sf"/>
</dbReference>
<dbReference type="NCBIfam" id="TIGR01044">
    <property type="entry name" value="rplV_bact"/>
    <property type="match status" value="1"/>
</dbReference>
<dbReference type="PANTHER" id="PTHR13501">
    <property type="entry name" value="CHLOROPLAST 50S RIBOSOMAL PROTEIN L22-RELATED"/>
    <property type="match status" value="1"/>
</dbReference>
<dbReference type="PANTHER" id="PTHR13501:SF8">
    <property type="entry name" value="LARGE RIBOSOMAL SUBUNIT PROTEIN UL22M"/>
    <property type="match status" value="1"/>
</dbReference>
<dbReference type="Pfam" id="PF00237">
    <property type="entry name" value="Ribosomal_L22"/>
    <property type="match status" value="1"/>
</dbReference>
<dbReference type="SUPFAM" id="SSF54843">
    <property type="entry name" value="Ribosomal protein L22"/>
    <property type="match status" value="1"/>
</dbReference>
<dbReference type="PROSITE" id="PS00464">
    <property type="entry name" value="RIBOSOMAL_L22"/>
    <property type="match status" value="1"/>
</dbReference>
<proteinExistence type="inferred from homology"/>
<organism>
    <name type="scientific">Alkaliphilus oremlandii (strain OhILAs)</name>
    <name type="common">Clostridium oremlandii (strain OhILAs)</name>
    <dbReference type="NCBI Taxonomy" id="350688"/>
    <lineage>
        <taxon>Bacteria</taxon>
        <taxon>Bacillati</taxon>
        <taxon>Bacillota</taxon>
        <taxon>Clostridia</taxon>
        <taxon>Peptostreptococcales</taxon>
        <taxon>Natronincolaceae</taxon>
        <taxon>Alkaliphilus</taxon>
    </lineage>
</organism>
<name>RL22_ALKOO</name>
<keyword id="KW-1185">Reference proteome</keyword>
<keyword id="KW-0687">Ribonucleoprotein</keyword>
<keyword id="KW-0689">Ribosomal protein</keyword>
<keyword id="KW-0694">RNA-binding</keyword>
<keyword id="KW-0699">rRNA-binding</keyword>